<protein>
    <recommendedName>
        <fullName>Uncharacterized 8.9 kDa protein</fullName>
    </recommendedName>
</protein>
<feature type="chain" id="PRO_0000099665" description="Uncharacterized 8.9 kDa protein">
    <location>
        <begin position="1"/>
        <end position="81"/>
    </location>
</feature>
<keyword id="KW-1185">Reference proteome</keyword>
<sequence length="81" mass="8937">MDIKNLLTACTIFYITTLATADIPTPPPTGHVTRENILIRGIINVVIGVHLENLPRLDVMVTITQNVNAAHLIHIPQSQLF</sequence>
<organism>
    <name type="scientific">Vaccinia virus (strain Western Reserve)</name>
    <name type="common">VACV</name>
    <name type="synonym">Vaccinia virus (strain WR)</name>
    <dbReference type="NCBI Taxonomy" id="10254"/>
    <lineage>
        <taxon>Viruses</taxon>
        <taxon>Varidnaviria</taxon>
        <taxon>Bamfordvirae</taxon>
        <taxon>Nucleocytoviricota</taxon>
        <taxon>Pokkesviricetes</taxon>
        <taxon>Chitovirales</taxon>
        <taxon>Poxviridae</taxon>
        <taxon>Chordopoxvirinae</taxon>
        <taxon>Orthopoxvirus</taxon>
        <taxon>Vaccinia virus</taxon>
    </lineage>
</organism>
<gene>
    <name type="ORF">SALFE</name>
</gene>
<dbReference type="EMBL" id="AY243312">
    <property type="status" value="NOT_ANNOTATED_CDS"/>
    <property type="molecule type" value="Genomic_DNA"/>
</dbReference>
<dbReference type="PIR" id="G42525">
    <property type="entry name" value="G42525"/>
</dbReference>
<dbReference type="Proteomes" id="UP000000344">
    <property type="component" value="Genome"/>
</dbReference>
<name>YVAT_VACCW</name>
<organismHost>
    <name type="scientific">Bos taurus</name>
    <name type="common">Bovine</name>
    <dbReference type="NCBI Taxonomy" id="9913"/>
</organismHost>
<reference key="1">
    <citation type="journal article" date="1991" name="J. Gen. Virol.">
        <title>Nucleotide sequence of 42 kbp of vaccinia virus strain WR from near the right inverted terminal repeat.</title>
        <authorList>
            <person name="Smith G.L."/>
            <person name="Chan Y.S."/>
            <person name="Howard S.T."/>
        </authorList>
    </citation>
    <scope>NUCLEOTIDE SEQUENCE [GENOMIC DNA]</scope>
</reference>
<proteinExistence type="predicted"/>
<accession>P68631</accession>
<accession>P20529</accession>